<keyword id="KW-0066">ATP synthesis</keyword>
<keyword id="KW-0067">ATP-binding</keyword>
<keyword id="KW-0997">Cell inner membrane</keyword>
<keyword id="KW-1003">Cell membrane</keyword>
<keyword id="KW-0139">CF(1)</keyword>
<keyword id="KW-0375">Hydrogen ion transport</keyword>
<keyword id="KW-0406">Ion transport</keyword>
<keyword id="KW-0472">Membrane</keyword>
<keyword id="KW-0547">Nucleotide-binding</keyword>
<keyword id="KW-1185">Reference proteome</keyword>
<keyword id="KW-1278">Translocase</keyword>
<keyword id="KW-0813">Transport</keyword>
<comment type="function">
    <text evidence="1">Produces ATP from ADP in the presence of a proton gradient across the membrane. The alpha chain is a regulatory subunit.</text>
</comment>
<comment type="catalytic activity">
    <reaction evidence="1">
        <text>ATP + H2O + 4 H(+)(in) = ADP + phosphate + 5 H(+)(out)</text>
        <dbReference type="Rhea" id="RHEA:57720"/>
        <dbReference type="ChEBI" id="CHEBI:15377"/>
        <dbReference type="ChEBI" id="CHEBI:15378"/>
        <dbReference type="ChEBI" id="CHEBI:30616"/>
        <dbReference type="ChEBI" id="CHEBI:43474"/>
        <dbReference type="ChEBI" id="CHEBI:456216"/>
        <dbReference type="EC" id="7.1.2.2"/>
    </reaction>
</comment>
<comment type="subunit">
    <text evidence="1">F-type ATPases have 2 components, CF(1) - the catalytic core - and CF(0) - the membrane proton channel. CF(1) has five subunits: alpha(3), beta(3), gamma(1), delta(1), epsilon(1). CF(0) has three main subunits: a(1), b(2) and c(9-12). The alpha and beta chains form an alternating ring which encloses part of the gamma chain. CF(1) is attached to CF(0) by a central stalk formed by the gamma and epsilon chains, while a peripheral stalk is formed by the delta and b chains.</text>
</comment>
<comment type="subcellular location">
    <subcellularLocation>
        <location evidence="1">Cell inner membrane</location>
        <topology evidence="1">Peripheral membrane protein</topology>
    </subcellularLocation>
</comment>
<comment type="similarity">
    <text evidence="1">Belongs to the ATPase alpha/beta chains family.</text>
</comment>
<evidence type="ECO:0000255" key="1">
    <source>
        <dbReference type="HAMAP-Rule" id="MF_01346"/>
    </source>
</evidence>
<evidence type="ECO:0000256" key="2">
    <source>
        <dbReference type="SAM" id="MobiDB-lite"/>
    </source>
</evidence>
<organism>
    <name type="scientific">Burkholderia mallei (strain ATCC 23344)</name>
    <dbReference type="NCBI Taxonomy" id="243160"/>
    <lineage>
        <taxon>Bacteria</taxon>
        <taxon>Pseudomonadati</taxon>
        <taxon>Pseudomonadota</taxon>
        <taxon>Betaproteobacteria</taxon>
        <taxon>Burkholderiales</taxon>
        <taxon>Burkholderiaceae</taxon>
        <taxon>Burkholderia</taxon>
        <taxon>pseudomallei group</taxon>
    </lineage>
</organism>
<protein>
    <recommendedName>
        <fullName evidence="1">ATP synthase subunit alpha 2</fullName>
        <ecNumber evidence="1">7.1.2.2</ecNumber>
    </recommendedName>
    <alternativeName>
        <fullName evidence="1">ATP synthase F1 sector subunit alpha 2</fullName>
    </alternativeName>
    <alternativeName>
        <fullName evidence="1">F-ATPase subunit alpha 2</fullName>
    </alternativeName>
</protein>
<dbReference type="EC" id="7.1.2.2" evidence="1"/>
<dbReference type="EMBL" id="CP000011">
    <property type="protein sequence ID" value="AAU46326.1"/>
    <property type="molecule type" value="Genomic_DNA"/>
</dbReference>
<dbReference type="RefSeq" id="WP_004188355.1">
    <property type="nucleotide sequence ID" value="NC_006349.2"/>
</dbReference>
<dbReference type="RefSeq" id="YP_104968.1">
    <property type="nucleotide sequence ID" value="NC_006349.2"/>
</dbReference>
<dbReference type="SMR" id="Q62EB0"/>
<dbReference type="GeneID" id="92977157"/>
<dbReference type="KEGG" id="bma:BMAA0130"/>
<dbReference type="PATRIC" id="fig|243160.12.peg.3624"/>
<dbReference type="eggNOG" id="COG0056">
    <property type="taxonomic scope" value="Bacteria"/>
</dbReference>
<dbReference type="HOGENOM" id="CLU_010091_4_0_4"/>
<dbReference type="Proteomes" id="UP000006693">
    <property type="component" value="Chromosome 2"/>
</dbReference>
<dbReference type="GO" id="GO:0005886">
    <property type="term" value="C:plasma membrane"/>
    <property type="evidence" value="ECO:0007669"/>
    <property type="project" value="UniProtKB-SubCell"/>
</dbReference>
<dbReference type="GO" id="GO:0045259">
    <property type="term" value="C:proton-transporting ATP synthase complex"/>
    <property type="evidence" value="ECO:0007669"/>
    <property type="project" value="UniProtKB-KW"/>
</dbReference>
<dbReference type="GO" id="GO:0043531">
    <property type="term" value="F:ADP binding"/>
    <property type="evidence" value="ECO:0007669"/>
    <property type="project" value="TreeGrafter"/>
</dbReference>
<dbReference type="GO" id="GO:0005524">
    <property type="term" value="F:ATP binding"/>
    <property type="evidence" value="ECO:0007669"/>
    <property type="project" value="UniProtKB-UniRule"/>
</dbReference>
<dbReference type="GO" id="GO:0046933">
    <property type="term" value="F:proton-transporting ATP synthase activity, rotational mechanism"/>
    <property type="evidence" value="ECO:0007669"/>
    <property type="project" value="UniProtKB-UniRule"/>
</dbReference>
<dbReference type="CDD" id="cd18113">
    <property type="entry name" value="ATP-synt_F1_alpha_C"/>
    <property type="match status" value="1"/>
</dbReference>
<dbReference type="CDD" id="cd18116">
    <property type="entry name" value="ATP-synt_F1_alpha_N"/>
    <property type="match status" value="1"/>
</dbReference>
<dbReference type="CDD" id="cd01132">
    <property type="entry name" value="F1-ATPase_alpha_CD"/>
    <property type="match status" value="1"/>
</dbReference>
<dbReference type="FunFam" id="3.40.50.300:FF:004039">
    <property type="entry name" value="ATP synthase subunit alpha, mitochondrial"/>
    <property type="match status" value="1"/>
</dbReference>
<dbReference type="Gene3D" id="2.40.30.20">
    <property type="match status" value="1"/>
</dbReference>
<dbReference type="Gene3D" id="1.20.150.20">
    <property type="entry name" value="ATP synthase alpha/beta chain, C-terminal domain"/>
    <property type="match status" value="1"/>
</dbReference>
<dbReference type="Gene3D" id="3.40.50.300">
    <property type="entry name" value="P-loop containing nucleotide triphosphate hydrolases"/>
    <property type="match status" value="1"/>
</dbReference>
<dbReference type="HAMAP" id="MF_01346">
    <property type="entry name" value="ATP_synth_alpha_bact"/>
    <property type="match status" value="1"/>
</dbReference>
<dbReference type="InterPro" id="IPR023366">
    <property type="entry name" value="ATP_synth_asu-like_sf"/>
</dbReference>
<dbReference type="InterPro" id="IPR000793">
    <property type="entry name" value="ATP_synth_asu_C"/>
</dbReference>
<dbReference type="InterPro" id="IPR038376">
    <property type="entry name" value="ATP_synth_asu_C_sf"/>
</dbReference>
<dbReference type="InterPro" id="IPR033732">
    <property type="entry name" value="ATP_synth_F1_a_nt-bd_dom"/>
</dbReference>
<dbReference type="InterPro" id="IPR005294">
    <property type="entry name" value="ATP_synth_F1_asu"/>
</dbReference>
<dbReference type="InterPro" id="IPR020003">
    <property type="entry name" value="ATPase_a/bsu_AS"/>
</dbReference>
<dbReference type="InterPro" id="IPR004100">
    <property type="entry name" value="ATPase_F1/V1/A1_a/bsu_N"/>
</dbReference>
<dbReference type="InterPro" id="IPR036121">
    <property type="entry name" value="ATPase_F1/V1/A1_a/bsu_N_sf"/>
</dbReference>
<dbReference type="InterPro" id="IPR000194">
    <property type="entry name" value="ATPase_F1/V1/A1_a/bsu_nucl-bd"/>
</dbReference>
<dbReference type="InterPro" id="IPR027417">
    <property type="entry name" value="P-loop_NTPase"/>
</dbReference>
<dbReference type="NCBIfam" id="TIGR00962">
    <property type="entry name" value="atpA"/>
    <property type="match status" value="1"/>
</dbReference>
<dbReference type="NCBIfam" id="NF009884">
    <property type="entry name" value="PRK13343.1"/>
    <property type="match status" value="1"/>
</dbReference>
<dbReference type="PANTHER" id="PTHR48082">
    <property type="entry name" value="ATP SYNTHASE SUBUNIT ALPHA, MITOCHONDRIAL"/>
    <property type="match status" value="1"/>
</dbReference>
<dbReference type="PANTHER" id="PTHR48082:SF2">
    <property type="entry name" value="ATP SYNTHASE SUBUNIT ALPHA, MITOCHONDRIAL"/>
    <property type="match status" value="1"/>
</dbReference>
<dbReference type="Pfam" id="PF00006">
    <property type="entry name" value="ATP-synt_ab"/>
    <property type="match status" value="1"/>
</dbReference>
<dbReference type="Pfam" id="PF00306">
    <property type="entry name" value="ATP-synt_ab_C"/>
    <property type="match status" value="1"/>
</dbReference>
<dbReference type="Pfam" id="PF02874">
    <property type="entry name" value="ATP-synt_ab_N"/>
    <property type="match status" value="1"/>
</dbReference>
<dbReference type="SUPFAM" id="SSF47917">
    <property type="entry name" value="C-terminal domain of alpha and beta subunits of F1 ATP synthase"/>
    <property type="match status" value="1"/>
</dbReference>
<dbReference type="SUPFAM" id="SSF50615">
    <property type="entry name" value="N-terminal domain of alpha and beta subunits of F1 ATP synthase"/>
    <property type="match status" value="1"/>
</dbReference>
<dbReference type="SUPFAM" id="SSF52540">
    <property type="entry name" value="P-loop containing nucleoside triphosphate hydrolases"/>
    <property type="match status" value="1"/>
</dbReference>
<dbReference type="PROSITE" id="PS00152">
    <property type="entry name" value="ATPASE_ALPHA_BETA"/>
    <property type="match status" value="1"/>
</dbReference>
<name>ATPA2_BURMA</name>
<proteinExistence type="inferred from homology"/>
<gene>
    <name evidence="1" type="primary">atpA2</name>
    <name type="synonym">atpA-2</name>
    <name type="ordered locus">BMAA0130</name>
</gene>
<reference key="1">
    <citation type="journal article" date="2004" name="Proc. Natl. Acad. Sci. U.S.A.">
        <title>Structural flexibility in the Burkholderia mallei genome.</title>
        <authorList>
            <person name="Nierman W.C."/>
            <person name="DeShazer D."/>
            <person name="Kim H.S."/>
            <person name="Tettelin H."/>
            <person name="Nelson K.E."/>
            <person name="Feldblyum T.V."/>
            <person name="Ulrich R.L."/>
            <person name="Ronning C.M."/>
            <person name="Brinkac L.M."/>
            <person name="Daugherty S.C."/>
            <person name="Davidsen T.D."/>
            <person name="DeBoy R.T."/>
            <person name="Dimitrov G."/>
            <person name="Dodson R.J."/>
            <person name="Durkin A.S."/>
            <person name="Gwinn M.L."/>
            <person name="Haft D.H."/>
            <person name="Khouri H.M."/>
            <person name="Kolonay J.F."/>
            <person name="Madupu R."/>
            <person name="Mohammoud Y."/>
            <person name="Nelson W.C."/>
            <person name="Radune D."/>
            <person name="Romero C.M."/>
            <person name="Sarria S."/>
            <person name="Selengut J."/>
            <person name="Shamblin C."/>
            <person name="Sullivan S.A."/>
            <person name="White O."/>
            <person name="Yu Y."/>
            <person name="Zafar N."/>
            <person name="Zhou L."/>
            <person name="Fraser C.M."/>
        </authorList>
    </citation>
    <scope>NUCLEOTIDE SEQUENCE [LARGE SCALE GENOMIC DNA]</scope>
    <source>
        <strain>ATCC 23344</strain>
    </source>
</reference>
<feature type="chain" id="PRO_0000238218" description="ATP synthase subunit alpha 2">
    <location>
        <begin position="1"/>
        <end position="670"/>
    </location>
</feature>
<feature type="region of interest" description="Disordered" evidence="2">
    <location>
        <begin position="525"/>
        <end position="670"/>
    </location>
</feature>
<feature type="compositionally biased region" description="Basic and acidic residues" evidence="2">
    <location>
        <begin position="543"/>
        <end position="588"/>
    </location>
</feature>
<feature type="compositionally biased region" description="Low complexity" evidence="2">
    <location>
        <begin position="589"/>
        <end position="599"/>
    </location>
</feature>
<feature type="compositionally biased region" description="Basic and acidic residues" evidence="2">
    <location>
        <begin position="621"/>
        <end position="639"/>
    </location>
</feature>
<feature type="compositionally biased region" description="Low complexity" evidence="2">
    <location>
        <begin position="650"/>
        <end position="661"/>
    </location>
</feature>
<feature type="binding site" evidence="1">
    <location>
        <begin position="180"/>
        <end position="187"/>
    </location>
    <ligand>
        <name>ATP</name>
        <dbReference type="ChEBI" id="CHEBI:30616"/>
    </ligand>
</feature>
<feature type="site" description="Required for activity" evidence="1">
    <location>
        <position position="373"/>
    </location>
</feature>
<sequence length="670" mass="70296">MTPTPDAPAAADAATGAGWLARRRGALARVALAPIAQAIGRVERVADGIAFVSGLEDTMLNEVLRFEGGVTGFAHTLDEDLISVVLLDPDAGVRAQTAVARTGAVLEVPAGPQLLGRVVDPLGRPLDGGAPLDAAHTLPIERAAPAIIERDLVSEPLDTGVLIVDALFTIGRGQRELIIGDRATGKTSLAIDAIVNQRHSDVICVYVAIGQRASAVRRVIDAVRRYGAPERCVFVVAPAACAPGLQWIAPFAGFSIAEYFRDRGQHALVVVDDLTKHAATHRELALLTREPPGREAYPGDIFYVHARLLERAAKLSAALGGGSLSALPIAETDAGNLAAYIPTNLISITDGQIVLDSALFAANQRPAVDVGLSVSRVGGKAQHPALRAASGRLRLDYAQFLELEAFTRFGGLTDARLRAQITRGERIRALITQPRFRALRTLDEVVLLKALAAGTLDAMSPDLVAPLRERLPAWLDARIAALTPALAPPRDWLADDAALDALAESVGELIERIAADAARRATAGMPAEDAAGDIGGAFGGEQARGDADRDADHGANREVSREVSPEASREVSREVSREVSHEADRDAAADAARVAGRAPGRAEPDRAVPRAMPDGPPRAQADGDRASASRPPPDARGDAARTAPSPQGGADANVNADANVDAEAEARHKR</sequence>
<accession>Q62EB0</accession>